<feature type="chain" id="PRO_1000051291" description="Small ribosomal subunit protein uS9">
    <location>
        <begin position="1"/>
        <end position="130"/>
    </location>
</feature>
<comment type="similarity">
    <text evidence="1">Belongs to the universal ribosomal protein uS9 family.</text>
</comment>
<accession>A6VBA5</accession>
<reference key="1">
    <citation type="submission" date="2007-06" db="EMBL/GenBank/DDBJ databases">
        <authorList>
            <person name="Dodson R.J."/>
            <person name="Harkins D."/>
            <person name="Paulsen I.T."/>
        </authorList>
    </citation>
    <scope>NUCLEOTIDE SEQUENCE [LARGE SCALE GENOMIC DNA]</scope>
    <source>
        <strain>DSM 24068 / PA7</strain>
    </source>
</reference>
<keyword id="KW-0687">Ribonucleoprotein</keyword>
<keyword id="KW-0689">Ribosomal protein</keyword>
<organism>
    <name type="scientific">Pseudomonas paraeruginosa (strain DSM 24068 / PA7)</name>
    <name type="common">Pseudomonas aeruginosa (strain PA7)</name>
    <dbReference type="NCBI Taxonomy" id="381754"/>
    <lineage>
        <taxon>Bacteria</taxon>
        <taxon>Pseudomonadati</taxon>
        <taxon>Pseudomonadota</taxon>
        <taxon>Gammaproteobacteria</taxon>
        <taxon>Pseudomonadales</taxon>
        <taxon>Pseudomonadaceae</taxon>
        <taxon>Pseudomonas</taxon>
        <taxon>Pseudomonas paraeruginosa</taxon>
    </lineage>
</organism>
<proteinExistence type="inferred from homology"/>
<name>RS9_PSEP7</name>
<gene>
    <name evidence="1" type="primary">rpsI</name>
    <name type="ordered locus">PSPA7_5004</name>
</gene>
<protein>
    <recommendedName>
        <fullName evidence="1">Small ribosomal subunit protein uS9</fullName>
    </recommendedName>
    <alternativeName>
        <fullName evidence="2">30S ribosomal protein S9</fullName>
    </alternativeName>
</protein>
<evidence type="ECO:0000255" key="1">
    <source>
        <dbReference type="HAMAP-Rule" id="MF_00532"/>
    </source>
</evidence>
<evidence type="ECO:0000305" key="2"/>
<dbReference type="EMBL" id="CP000744">
    <property type="protein sequence ID" value="ABR85484.1"/>
    <property type="molecule type" value="Genomic_DNA"/>
</dbReference>
<dbReference type="RefSeq" id="WP_003150422.1">
    <property type="nucleotide sequence ID" value="NC_009656.1"/>
</dbReference>
<dbReference type="SMR" id="A6VBA5"/>
<dbReference type="GeneID" id="77222933"/>
<dbReference type="KEGG" id="pap:PSPA7_5004"/>
<dbReference type="HOGENOM" id="CLU_046483_2_1_6"/>
<dbReference type="Proteomes" id="UP000001582">
    <property type="component" value="Chromosome"/>
</dbReference>
<dbReference type="GO" id="GO:0022627">
    <property type="term" value="C:cytosolic small ribosomal subunit"/>
    <property type="evidence" value="ECO:0007669"/>
    <property type="project" value="TreeGrafter"/>
</dbReference>
<dbReference type="GO" id="GO:0003723">
    <property type="term" value="F:RNA binding"/>
    <property type="evidence" value="ECO:0007669"/>
    <property type="project" value="TreeGrafter"/>
</dbReference>
<dbReference type="GO" id="GO:0003735">
    <property type="term" value="F:structural constituent of ribosome"/>
    <property type="evidence" value="ECO:0007669"/>
    <property type="project" value="InterPro"/>
</dbReference>
<dbReference type="GO" id="GO:0006412">
    <property type="term" value="P:translation"/>
    <property type="evidence" value="ECO:0007669"/>
    <property type="project" value="UniProtKB-UniRule"/>
</dbReference>
<dbReference type="FunFam" id="3.30.230.10:FF:000001">
    <property type="entry name" value="30S ribosomal protein S9"/>
    <property type="match status" value="1"/>
</dbReference>
<dbReference type="Gene3D" id="3.30.230.10">
    <property type="match status" value="1"/>
</dbReference>
<dbReference type="HAMAP" id="MF_00532_B">
    <property type="entry name" value="Ribosomal_uS9_B"/>
    <property type="match status" value="1"/>
</dbReference>
<dbReference type="InterPro" id="IPR020568">
    <property type="entry name" value="Ribosomal_Su5_D2-typ_SF"/>
</dbReference>
<dbReference type="InterPro" id="IPR000754">
    <property type="entry name" value="Ribosomal_uS9"/>
</dbReference>
<dbReference type="InterPro" id="IPR023035">
    <property type="entry name" value="Ribosomal_uS9_bac/plastid"/>
</dbReference>
<dbReference type="InterPro" id="IPR020574">
    <property type="entry name" value="Ribosomal_uS9_CS"/>
</dbReference>
<dbReference type="InterPro" id="IPR014721">
    <property type="entry name" value="Ribsml_uS5_D2-typ_fold_subgr"/>
</dbReference>
<dbReference type="NCBIfam" id="NF001099">
    <property type="entry name" value="PRK00132.1"/>
    <property type="match status" value="1"/>
</dbReference>
<dbReference type="PANTHER" id="PTHR21569">
    <property type="entry name" value="RIBOSOMAL PROTEIN S9"/>
    <property type="match status" value="1"/>
</dbReference>
<dbReference type="PANTHER" id="PTHR21569:SF1">
    <property type="entry name" value="SMALL RIBOSOMAL SUBUNIT PROTEIN US9M"/>
    <property type="match status" value="1"/>
</dbReference>
<dbReference type="Pfam" id="PF00380">
    <property type="entry name" value="Ribosomal_S9"/>
    <property type="match status" value="1"/>
</dbReference>
<dbReference type="SUPFAM" id="SSF54211">
    <property type="entry name" value="Ribosomal protein S5 domain 2-like"/>
    <property type="match status" value="1"/>
</dbReference>
<dbReference type="PROSITE" id="PS00360">
    <property type="entry name" value="RIBOSOMAL_S9"/>
    <property type="match status" value="1"/>
</dbReference>
<sequence>MSATQNYGTGRRKTATARVFLRPGTGKISINNRGLDQFFGRETARMVVRQPLELTETVEKFDIFVTVVGGGVSGQAGAIRHGITRALIEYDETLRSPLRKAGYVTRDAREVERKKVGLRKARKRPQYSKR</sequence>